<name>RL30_STRP6</name>
<keyword id="KW-0687">Ribonucleoprotein</keyword>
<keyword id="KW-0689">Ribosomal protein</keyword>
<sequence length="60" mass="6442">MAQIKITLTKSPIGRKPEQRKTVVALGLGKLNSSVVKEDNAAIRGMVTAISHLVTVEDVK</sequence>
<organism>
    <name type="scientific">Streptococcus pyogenes serotype M6 (strain ATCC BAA-946 / MGAS10394)</name>
    <dbReference type="NCBI Taxonomy" id="286636"/>
    <lineage>
        <taxon>Bacteria</taxon>
        <taxon>Bacillati</taxon>
        <taxon>Bacillota</taxon>
        <taxon>Bacilli</taxon>
        <taxon>Lactobacillales</taxon>
        <taxon>Streptococcaceae</taxon>
        <taxon>Streptococcus</taxon>
    </lineage>
</organism>
<protein>
    <recommendedName>
        <fullName evidence="1">Large ribosomal subunit protein uL30</fullName>
    </recommendedName>
    <alternativeName>
        <fullName evidence="2">50S ribosomal protein L30</fullName>
    </alternativeName>
</protein>
<accession>Q5XEB7</accession>
<evidence type="ECO:0000255" key="1">
    <source>
        <dbReference type="HAMAP-Rule" id="MF_01371"/>
    </source>
</evidence>
<evidence type="ECO:0000305" key="2"/>
<gene>
    <name evidence="1" type="primary">rpmD</name>
    <name type="ordered locus">M6_Spy0111</name>
</gene>
<proteinExistence type="inferred from homology"/>
<dbReference type="EMBL" id="CP000003">
    <property type="protein sequence ID" value="AAT86246.1"/>
    <property type="molecule type" value="Genomic_DNA"/>
</dbReference>
<dbReference type="RefSeq" id="WP_002986624.1">
    <property type="nucleotide sequence ID" value="NC_006086.1"/>
</dbReference>
<dbReference type="SMR" id="Q5XEB7"/>
<dbReference type="GeneID" id="69900044"/>
<dbReference type="KEGG" id="spa:M6_Spy0111"/>
<dbReference type="HOGENOM" id="CLU_131047_2_1_9"/>
<dbReference type="Proteomes" id="UP000001167">
    <property type="component" value="Chromosome"/>
</dbReference>
<dbReference type="GO" id="GO:0022625">
    <property type="term" value="C:cytosolic large ribosomal subunit"/>
    <property type="evidence" value="ECO:0007669"/>
    <property type="project" value="TreeGrafter"/>
</dbReference>
<dbReference type="GO" id="GO:0003735">
    <property type="term" value="F:structural constituent of ribosome"/>
    <property type="evidence" value="ECO:0007669"/>
    <property type="project" value="InterPro"/>
</dbReference>
<dbReference type="GO" id="GO:0006412">
    <property type="term" value="P:translation"/>
    <property type="evidence" value="ECO:0007669"/>
    <property type="project" value="UniProtKB-UniRule"/>
</dbReference>
<dbReference type="CDD" id="cd01658">
    <property type="entry name" value="Ribosomal_L30"/>
    <property type="match status" value="1"/>
</dbReference>
<dbReference type="FunFam" id="3.30.1390.20:FF:000001">
    <property type="entry name" value="50S ribosomal protein L30"/>
    <property type="match status" value="1"/>
</dbReference>
<dbReference type="Gene3D" id="3.30.1390.20">
    <property type="entry name" value="Ribosomal protein L30, ferredoxin-like fold domain"/>
    <property type="match status" value="1"/>
</dbReference>
<dbReference type="HAMAP" id="MF_01371_B">
    <property type="entry name" value="Ribosomal_uL30_B"/>
    <property type="match status" value="1"/>
</dbReference>
<dbReference type="InterPro" id="IPR036919">
    <property type="entry name" value="Ribo_uL30_ferredoxin-like_sf"/>
</dbReference>
<dbReference type="InterPro" id="IPR005996">
    <property type="entry name" value="Ribosomal_uL30_bac-type"/>
</dbReference>
<dbReference type="InterPro" id="IPR018038">
    <property type="entry name" value="Ribosomal_uL30_CS"/>
</dbReference>
<dbReference type="InterPro" id="IPR016082">
    <property type="entry name" value="Ribosomal_uL30_ferredoxin-like"/>
</dbReference>
<dbReference type="NCBIfam" id="TIGR01308">
    <property type="entry name" value="rpmD_bact"/>
    <property type="match status" value="1"/>
</dbReference>
<dbReference type="PANTHER" id="PTHR15892:SF2">
    <property type="entry name" value="LARGE RIBOSOMAL SUBUNIT PROTEIN UL30M"/>
    <property type="match status" value="1"/>
</dbReference>
<dbReference type="PANTHER" id="PTHR15892">
    <property type="entry name" value="MITOCHONDRIAL RIBOSOMAL PROTEIN L30"/>
    <property type="match status" value="1"/>
</dbReference>
<dbReference type="Pfam" id="PF00327">
    <property type="entry name" value="Ribosomal_L30"/>
    <property type="match status" value="1"/>
</dbReference>
<dbReference type="PIRSF" id="PIRSF002211">
    <property type="entry name" value="Ribosomal_L30_bac-type"/>
    <property type="match status" value="1"/>
</dbReference>
<dbReference type="SUPFAM" id="SSF55129">
    <property type="entry name" value="Ribosomal protein L30p/L7e"/>
    <property type="match status" value="1"/>
</dbReference>
<dbReference type="PROSITE" id="PS00634">
    <property type="entry name" value="RIBOSOMAL_L30"/>
    <property type="match status" value="1"/>
</dbReference>
<reference key="1">
    <citation type="journal article" date="2004" name="J. Infect. Dis.">
        <title>Progress toward characterization of the group A Streptococcus metagenome: complete genome sequence of a macrolide-resistant serotype M6 strain.</title>
        <authorList>
            <person name="Banks D.J."/>
            <person name="Porcella S.F."/>
            <person name="Barbian K.D."/>
            <person name="Beres S.B."/>
            <person name="Philips L.E."/>
            <person name="Voyich J.M."/>
            <person name="DeLeo F.R."/>
            <person name="Martin J.M."/>
            <person name="Somerville G.A."/>
            <person name="Musser J.M."/>
        </authorList>
    </citation>
    <scope>NUCLEOTIDE SEQUENCE [LARGE SCALE GENOMIC DNA]</scope>
    <source>
        <strain>ATCC BAA-946 / MGAS10394</strain>
    </source>
</reference>
<feature type="chain" id="PRO_0000273876" description="Large ribosomal subunit protein uL30">
    <location>
        <begin position="1"/>
        <end position="60"/>
    </location>
</feature>
<comment type="subunit">
    <text evidence="1">Part of the 50S ribosomal subunit.</text>
</comment>
<comment type="similarity">
    <text evidence="1">Belongs to the universal ribosomal protein uL30 family.</text>
</comment>